<proteinExistence type="evidence at protein level"/>
<protein>
    <recommendedName>
        <fullName evidence="7">Coadhesin</fullName>
    </recommendedName>
</protein>
<comment type="subcellular location">
    <subcellularLocation>
        <location evidence="1">Membrane</location>
        <topology evidence="1">Single-pass membrane protein</topology>
    </subcellularLocation>
    <text evidence="1 7">Presence in the organic matrix of the skeleton may be due to shedding of a soluble peptide.</text>
</comment>
<comment type="tissue specificity">
    <text evidence="6">Component of the acid-insoluble and acid-soluble organic matrix of the aragonitic skeleton (at protein level).</text>
</comment>
<keyword id="KW-0903">Direct protein sequencing</keyword>
<keyword id="KW-1015">Disulfide bond</keyword>
<keyword id="KW-0472">Membrane</keyword>
<keyword id="KW-0677">Repeat</keyword>
<keyword id="KW-0812">Transmembrane</keyword>
<keyword id="KW-1133">Transmembrane helix</keyword>
<name>CADN_ACRMI</name>
<evidence type="ECO:0000255" key="1"/>
<evidence type="ECO:0000255" key="2">
    <source>
        <dbReference type="PROSITE-ProRule" id="PRU00081"/>
    </source>
</evidence>
<evidence type="ECO:0000255" key="3">
    <source>
        <dbReference type="PROSITE-ProRule" id="PRU00210"/>
    </source>
</evidence>
<evidence type="ECO:0000255" key="4">
    <source>
        <dbReference type="PROSITE-ProRule" id="PRU00219"/>
    </source>
</evidence>
<evidence type="ECO:0000256" key="5">
    <source>
        <dbReference type="SAM" id="MobiDB-lite"/>
    </source>
</evidence>
<evidence type="ECO:0000269" key="6">
    <source>
    </source>
</evidence>
<evidence type="ECO:0000303" key="7">
    <source>
    </source>
</evidence>
<evidence type="ECO:0000305" key="8"/>
<organism>
    <name type="scientific">Acropora millepora</name>
    <name type="common">Staghorn coral</name>
    <name type="synonym">Heteropora millepora</name>
    <dbReference type="NCBI Taxonomy" id="45264"/>
    <lineage>
        <taxon>Eukaryota</taxon>
        <taxon>Metazoa</taxon>
        <taxon>Cnidaria</taxon>
        <taxon>Anthozoa</taxon>
        <taxon>Hexacorallia</taxon>
        <taxon>Scleractinia</taxon>
        <taxon>Astrocoeniina</taxon>
        <taxon>Acroporidae</taxon>
        <taxon>Acropora</taxon>
    </lineage>
</organism>
<feature type="chain" id="PRO_0000429491" description="Coadhesin">
    <location>
        <begin position="1" status="less than"/>
        <end position="1675"/>
    </location>
</feature>
<feature type="topological domain" description="Extracellular" evidence="1">
    <location>
        <begin position="1"/>
        <end position="1356"/>
    </location>
</feature>
<feature type="transmembrane region" description="Helical" evidence="1">
    <location>
        <begin position="1357"/>
        <end position="1377"/>
    </location>
</feature>
<feature type="topological domain" description="Cytoplasmic" evidence="1">
    <location>
        <begin position="1378"/>
        <end position="1675"/>
    </location>
</feature>
<feature type="domain" description="F5/8 type C 1" evidence="2">
    <location>
        <begin position="11"/>
        <end position="160"/>
    </location>
</feature>
<feature type="domain" description="TSP type-1 1" evidence="3">
    <location>
        <begin position="168"/>
        <end position="220"/>
    </location>
</feature>
<feature type="domain" description="TSP type-1 2" evidence="3">
    <location>
        <begin position="224"/>
        <end position="279"/>
    </location>
</feature>
<feature type="domain" description="TSP type-1 3" evidence="3">
    <location>
        <begin position="281"/>
        <end position="336"/>
    </location>
</feature>
<feature type="domain" description="TSP type-1 4" evidence="3">
    <location>
        <begin position="338"/>
        <end position="393"/>
    </location>
</feature>
<feature type="domain" description="TSP type-1 5" evidence="3">
    <location>
        <begin position="403"/>
        <end position="458"/>
    </location>
</feature>
<feature type="domain" description="TSP type-1 6" evidence="3">
    <location>
        <begin position="460"/>
        <end position="515"/>
    </location>
</feature>
<feature type="domain" description="TSP type-1 7" evidence="3">
    <location>
        <begin position="517"/>
        <end position="572"/>
    </location>
</feature>
<feature type="domain" description="VWFA 1" evidence="4">
    <location>
        <begin position="595"/>
        <end position="769"/>
    </location>
</feature>
<feature type="domain" description="VWFA 2" evidence="4">
    <location>
        <begin position="778"/>
        <end position="958"/>
    </location>
</feature>
<feature type="domain" description="VWFA 3" evidence="4">
    <location>
        <begin position="966"/>
        <end position="1141"/>
    </location>
</feature>
<feature type="domain" description="TSP type-1 8" evidence="3">
    <location>
        <begin position="1144"/>
        <end position="1198"/>
    </location>
</feature>
<feature type="domain" description="F5/8 type C 2" evidence="2">
    <location>
        <begin position="1192"/>
        <end position="1336"/>
    </location>
</feature>
<feature type="region of interest" description="Disordered" evidence="5">
    <location>
        <begin position="567"/>
        <end position="588"/>
    </location>
</feature>
<feature type="region of interest" description="Disordered" evidence="5">
    <location>
        <begin position="1463"/>
        <end position="1491"/>
    </location>
</feature>
<feature type="compositionally biased region" description="Basic and acidic residues" evidence="5">
    <location>
        <begin position="1463"/>
        <end position="1480"/>
    </location>
</feature>
<feature type="compositionally biased region" description="Polar residues" evidence="5">
    <location>
        <begin position="1481"/>
        <end position="1491"/>
    </location>
</feature>
<feature type="disulfide bond" evidence="1">
    <location>
        <begin position="180"/>
        <end position="216"/>
    </location>
</feature>
<feature type="disulfide bond" evidence="1">
    <location>
        <begin position="184"/>
        <end position="219"/>
    </location>
</feature>
<feature type="disulfide bond" evidence="1">
    <location>
        <begin position="194"/>
        <end position="206"/>
    </location>
</feature>
<feature type="disulfide bond" evidence="1">
    <location>
        <begin position="236"/>
        <end position="273"/>
    </location>
</feature>
<feature type="disulfide bond" evidence="1">
    <location>
        <begin position="240"/>
        <end position="278"/>
    </location>
</feature>
<feature type="disulfide bond" evidence="1">
    <location>
        <begin position="251"/>
        <end position="263"/>
    </location>
</feature>
<feature type="disulfide bond" evidence="1">
    <location>
        <begin position="293"/>
        <end position="330"/>
    </location>
</feature>
<feature type="disulfide bond" evidence="1">
    <location>
        <begin position="297"/>
        <end position="335"/>
    </location>
</feature>
<feature type="disulfide bond" evidence="1">
    <location>
        <begin position="308"/>
        <end position="320"/>
    </location>
</feature>
<feature type="disulfide bond" evidence="1">
    <location>
        <begin position="350"/>
        <end position="387"/>
    </location>
</feature>
<feature type="disulfide bond" evidence="1">
    <location>
        <begin position="354"/>
        <end position="392"/>
    </location>
</feature>
<feature type="disulfide bond" evidence="1">
    <location>
        <begin position="365"/>
        <end position="377"/>
    </location>
</feature>
<feature type="disulfide bond" evidence="1">
    <location>
        <begin position="415"/>
        <end position="452"/>
    </location>
</feature>
<feature type="disulfide bond" evidence="1">
    <location>
        <begin position="419"/>
        <end position="457"/>
    </location>
</feature>
<feature type="disulfide bond" evidence="1">
    <location>
        <begin position="430"/>
        <end position="442"/>
    </location>
</feature>
<feature type="disulfide bond" evidence="1">
    <location>
        <begin position="472"/>
        <end position="509"/>
    </location>
</feature>
<feature type="disulfide bond" evidence="1">
    <location>
        <begin position="476"/>
        <end position="514"/>
    </location>
</feature>
<feature type="disulfide bond" evidence="1">
    <location>
        <begin position="487"/>
        <end position="499"/>
    </location>
</feature>
<feature type="disulfide bond" evidence="1">
    <location>
        <begin position="528"/>
        <end position="566"/>
    </location>
</feature>
<feature type="disulfide bond" evidence="1">
    <location>
        <begin position="532"/>
        <end position="571"/>
    </location>
</feature>
<feature type="disulfide bond" evidence="1">
    <location>
        <begin position="543"/>
        <end position="555"/>
    </location>
</feature>
<feature type="disulfide bond" evidence="1">
    <location>
        <begin position="1156"/>
        <end position="1192"/>
    </location>
</feature>
<feature type="disulfide bond" evidence="1">
    <location>
        <begin position="1160"/>
        <end position="1197"/>
    </location>
</feature>
<feature type="disulfide bond" evidence="1">
    <location>
        <begin position="1175"/>
        <end position="1182"/>
    </location>
</feature>
<feature type="non-terminal residue" evidence="8">
    <location>
        <position position="1"/>
    </location>
</feature>
<reference evidence="8" key="1">
    <citation type="journal article" date="2012" name="Mol. Ecol.">
        <title>Whole transcriptome analysis of the coral Acropora millepora reveals complex responses to CO(2)-driven acidification during the initiation of calcification.</title>
        <authorList>
            <person name="Moya A."/>
            <person name="Huisman L."/>
            <person name="Ball E.E."/>
            <person name="Hayward D.C."/>
            <person name="Grasso L.C."/>
            <person name="Chua C.M."/>
            <person name="Woo H.N."/>
            <person name="Gattuso J.P."/>
            <person name="Foret S."/>
            <person name="Miller D.J."/>
        </authorList>
    </citation>
    <scope>NUCLEOTIDE SEQUENCE [MRNA]</scope>
</reference>
<reference evidence="8" key="2">
    <citation type="journal article" date="2013" name="Mol. Biol. Evol.">
        <title>The skeletal proteome of the coral Acropora millepora: the evolution of calcification by co-option and domain shuffling.</title>
        <authorList>
            <person name="Ramos-Silva P."/>
            <person name="Kaandorp J."/>
            <person name="Huisman L."/>
            <person name="Marie B."/>
            <person name="Zanella-Cleon I."/>
            <person name="Guichard N."/>
            <person name="Miller D.J."/>
            <person name="Marin F."/>
        </authorList>
    </citation>
    <scope>PROTEIN SEQUENCE OF 72-84; 192-215; 607-616; 620-630; 664-724; 736-764; 849-869; 877-904; 933-957; 986-1001; 1014-1031; 1037-1050; 1093-1120; 1135-1150 AND 1176-1187</scope>
    <scope>TISSUE SPECIFICITY</scope>
    <scope>IDENTIFICATION BY MASS SPECTROMETRY</scope>
</reference>
<dbReference type="EMBL" id="JT016638">
    <property type="status" value="NOT_ANNOTATED_CDS"/>
    <property type="molecule type" value="mRNA"/>
</dbReference>
<dbReference type="SMR" id="B3EWZ3"/>
<dbReference type="OrthoDB" id="446173at2759"/>
<dbReference type="GO" id="GO:0016020">
    <property type="term" value="C:membrane"/>
    <property type="evidence" value="ECO:0007669"/>
    <property type="project" value="UniProtKB-SubCell"/>
</dbReference>
<dbReference type="CDD" id="cd00198">
    <property type="entry name" value="vWFA"/>
    <property type="match status" value="1"/>
</dbReference>
<dbReference type="CDD" id="cd01450">
    <property type="entry name" value="vWFA_subfamily_ECM"/>
    <property type="match status" value="2"/>
</dbReference>
<dbReference type="FunFam" id="2.20.100.10:FF:000001">
    <property type="entry name" value="semaphorin-5A isoform X1"/>
    <property type="match status" value="4"/>
</dbReference>
<dbReference type="FunFam" id="2.20.100.10:FF:000007">
    <property type="entry name" value="Thrombospondin 1"/>
    <property type="match status" value="1"/>
</dbReference>
<dbReference type="FunFam" id="2.20.100.10:FF:000002">
    <property type="entry name" value="Unc-5 netrin receptor C"/>
    <property type="match status" value="2"/>
</dbReference>
<dbReference type="Gene3D" id="2.60.120.260">
    <property type="entry name" value="Galactose-binding domain-like"/>
    <property type="match status" value="2"/>
</dbReference>
<dbReference type="Gene3D" id="2.20.100.10">
    <property type="entry name" value="Thrombospondin type-1 (TSP1) repeat"/>
    <property type="match status" value="8"/>
</dbReference>
<dbReference type="Gene3D" id="3.40.50.410">
    <property type="entry name" value="von Willebrand factor, type A domain"/>
    <property type="match status" value="3"/>
</dbReference>
<dbReference type="InterPro" id="IPR052065">
    <property type="entry name" value="Compl_asym_regulator"/>
</dbReference>
<dbReference type="InterPro" id="IPR000421">
    <property type="entry name" value="FA58C"/>
</dbReference>
<dbReference type="InterPro" id="IPR008979">
    <property type="entry name" value="Galactose-bd-like_sf"/>
</dbReference>
<dbReference type="InterPro" id="IPR000884">
    <property type="entry name" value="TSP1_rpt"/>
</dbReference>
<dbReference type="InterPro" id="IPR036383">
    <property type="entry name" value="TSP1_rpt_sf"/>
</dbReference>
<dbReference type="InterPro" id="IPR002035">
    <property type="entry name" value="VWF_A"/>
</dbReference>
<dbReference type="InterPro" id="IPR036465">
    <property type="entry name" value="vWFA_dom_sf"/>
</dbReference>
<dbReference type="PANTHER" id="PTHR22906">
    <property type="entry name" value="PROPERDIN"/>
    <property type="match status" value="1"/>
</dbReference>
<dbReference type="PANTHER" id="PTHR22906:SF43">
    <property type="entry name" value="PROPERDIN"/>
    <property type="match status" value="1"/>
</dbReference>
<dbReference type="Pfam" id="PF00754">
    <property type="entry name" value="F5_F8_type_C"/>
    <property type="match status" value="2"/>
</dbReference>
<dbReference type="Pfam" id="PF00090">
    <property type="entry name" value="TSP_1"/>
    <property type="match status" value="8"/>
</dbReference>
<dbReference type="Pfam" id="PF00092">
    <property type="entry name" value="VWA"/>
    <property type="match status" value="3"/>
</dbReference>
<dbReference type="PRINTS" id="PR01705">
    <property type="entry name" value="TSP1REPEAT"/>
</dbReference>
<dbReference type="SMART" id="SM00231">
    <property type="entry name" value="FA58C"/>
    <property type="match status" value="2"/>
</dbReference>
<dbReference type="SMART" id="SM00209">
    <property type="entry name" value="TSP1"/>
    <property type="match status" value="8"/>
</dbReference>
<dbReference type="SMART" id="SM00327">
    <property type="entry name" value="VWA"/>
    <property type="match status" value="3"/>
</dbReference>
<dbReference type="SUPFAM" id="SSF49785">
    <property type="entry name" value="Galactose-binding domain-like"/>
    <property type="match status" value="2"/>
</dbReference>
<dbReference type="SUPFAM" id="SSF82895">
    <property type="entry name" value="TSP-1 type 1 repeat"/>
    <property type="match status" value="8"/>
</dbReference>
<dbReference type="SUPFAM" id="SSF53300">
    <property type="entry name" value="vWA-like"/>
    <property type="match status" value="3"/>
</dbReference>
<dbReference type="PROSITE" id="PS01285">
    <property type="entry name" value="FA58C_1"/>
    <property type="match status" value="1"/>
</dbReference>
<dbReference type="PROSITE" id="PS50022">
    <property type="entry name" value="FA58C_3"/>
    <property type="match status" value="2"/>
</dbReference>
<dbReference type="PROSITE" id="PS50092">
    <property type="entry name" value="TSP1"/>
    <property type="match status" value="8"/>
</dbReference>
<dbReference type="PROSITE" id="PS50234">
    <property type="entry name" value="VWFA"/>
    <property type="match status" value="3"/>
</dbReference>
<sequence>QGNYYSYGGTTPGTPIGCTNLITLSNVKFFASSSSDGPDIPVLNSTDYWCSEFNWKNQSLTVDLGFVTFFDRLLVQGEPFTSRSVSEYFVLTSIDGINYTYILGTNGQSMKFVGPLFNGDQTRDTNLTAPVQARYVQFNPQEPMIAEDDSICMRVGVESCQLVPAAVNGAWSHWSPYGPCTHACLGTAKRTRTCADPAPVFGGSPCEGVNEEEKICNDCVGTVNGGWSPWGLWSRCSTTCNPGQRSRQRTCTNPSPKNGGTDCSGPSTQSEPCQVQFCPVDGGWSAWSGLSRCTRACGGGRQYQSRTCSNPFPGHGGRDCVGVRSLSFTCNTQCCPVHGGWSPWGSFSSCTRTCGGGQKSRTRVCNSPAPSCNGITCPGGNQDIQPCNQQTCPTSPSTSFPINGNYSNWGQWTACSVTCGQGTRERTRLCDNPAPAQGGSQCQGPSSELVGCTEIPCPVNGNWSSWGDWSNCSSGCGPGKSYRYRDCDNPAPANNGLNCTGPDQESKDCNSTACPVDGGWSAWSSTPCSATCGQGTLKRTRECNNPKPQYGGASCFGNETEQEVACNKGPCPTSPPTISPPTTGSPADSNIPELDLVFAVSATSSNRLATYNSMRDTINRFITTYGSNKVHYSIIVYGKAVQRVISFNHTFPPSVGELQEAISRHAPISGPTVLKNALQETQTIFQEIPSRPNAKKVLVVFTDSNSPSDGNLVQAVRPLENNKILVVSVGVGDVNRTELLTISPNPLDVLSVQPTAGPGALSKRIMDRILRRDIPLIDIGFALSATSSDFQDIFVKMKNVIRTIVERYGVERVKFSLIVYGQNVTTVLGDFNRNLTQADLVNYVNNLQRVPQNKNLDSALLEAESLFRQRARPNSKKVFVVLTDGVSTLSNANSLLINTAELRKSDVLILSVGFGSQTNQVGNQMNSVVFAPRDYIAVPNYPAERDVVIAETIMFKALEVNLPLIDLTFALSSSSILSQETFKLMKETVQSLVHTYGIDRIHYGVIVFGSVATRSFDFATNFPDQNELIRKVSQLTRSGGSPDLVAALKEARKVFQLKEVRPYARKVLVVMIDDESSANKNDLNEEVRALRNRSVLVIGVGIGTQTLPKDLGIITDDKRNTLKAGINKNRDELAREIISIILRPSGLSKWSSWSACSKTCRYLGKAGTQIRTRDCKIPELGCDGMRIDTVECNKMDCEGCGQRGPLNESAYTASSNSESPAFLAALNTSDPTAWCLINNENGGYVQLDLGELTRVYKVATKGEQQGDRWVTSYYLTLSEDGETFFDYKAAQRLSGNTDSTSVAFNVVNTTRPYRYVRFHPVNFKGEPCMQAAVFGCNEEKILPPPETIADQADAAKGILIVLWILAGILTFLLLMACCYYCCWHVCCGRGKKRKGLVYRERSIEDDGYLINDEKRWTLGSAPMTPVPRVREDEIQEVTIEMKEDNEQPLGVIQFGIETDETKEKHVTAEDVKSEKPKYSEEASSGTIKSGSTMMRMKANDGSDRRKRTKSEGDAIDAVDGDLDWSYLSDEQGTAFTNEAFVKSQEQFLEPPGSASFRGNKVDMRRSLSADELATLDYDLFEDRQGPLHTATLGRDGYMRMHKANQGSLPPSDGGREMGTVDVAIGGIRVPNSPKDDPIYDTAGQEIHLAVEQAGRSVYPLEDGGYRGEEWYSRWG</sequence>
<accession>B3EWZ3</accession>